<sequence>MKVIVLGGGVLGVSTAWYLAKAGCQVTVLERQDGVALETSFGNAGQISPGYSAPWAAPGIPLKGLKWMFQRHAPLAITPDGSLYQLQWIAKMLANCNEKAYAVNKGRMMRLAEYSRDKIKELRAETGLQYEGRQGGTLQLLRSQAQVEGMAKDIAVLRECGVDFNVLDPDGCARVEPALAAVKHKLAGGLQLPNDETGDCNLFTSRLAELARDKGVEFRFGVTVDGIENDGKRITGVRIGDELLRADHYVVAMGSYSRDMVKELGIDIPVYPVKGYSLTVPITNPDGAPTSTILDETYKVAITRFDNRIRVGGMAELSGYNLELNPRRRETLEMVVGDLYPNGGDIKAASFWTGLRPMTPDGTPIIGGTRFANLSLNTGHGTLGWTMCAGSGKVLADIITGAKPEISVDGLSMQRYAKQGETLVVPVIRPAVQGA</sequence>
<gene>
    <name evidence="1" type="primary">dadA</name>
    <name type="synonym">dadA2</name>
    <name type="ordered locus">CV_1914</name>
</gene>
<comment type="function">
    <text evidence="1">Oxidative deamination of D-amino acids.</text>
</comment>
<comment type="catalytic activity">
    <reaction evidence="1">
        <text>a D-alpha-amino acid + A + H2O = a 2-oxocarboxylate + AH2 + NH4(+)</text>
        <dbReference type="Rhea" id="RHEA:18125"/>
        <dbReference type="ChEBI" id="CHEBI:13193"/>
        <dbReference type="ChEBI" id="CHEBI:15377"/>
        <dbReference type="ChEBI" id="CHEBI:17499"/>
        <dbReference type="ChEBI" id="CHEBI:28938"/>
        <dbReference type="ChEBI" id="CHEBI:35179"/>
        <dbReference type="ChEBI" id="CHEBI:59871"/>
    </reaction>
</comment>
<comment type="cofactor">
    <cofactor evidence="1">
        <name>FAD</name>
        <dbReference type="ChEBI" id="CHEBI:57692"/>
    </cofactor>
</comment>
<comment type="pathway">
    <text>Amino-acid degradation; D-alanine degradation; NH(3) and pyruvate from D-alanine: step 1/1.</text>
</comment>
<comment type="similarity">
    <text evidence="1">Belongs to the DadA oxidoreductase family.</text>
</comment>
<proteinExistence type="inferred from homology"/>
<keyword id="KW-0274">FAD</keyword>
<keyword id="KW-0285">Flavoprotein</keyword>
<keyword id="KW-0560">Oxidoreductase</keyword>
<keyword id="KW-1185">Reference proteome</keyword>
<organism>
    <name type="scientific">Chromobacterium violaceum (strain ATCC 12472 / DSM 30191 / JCM 1249 / CCUG 213 / NBRC 12614 / NCIMB 9131 / NCTC 9757 / MK)</name>
    <dbReference type="NCBI Taxonomy" id="243365"/>
    <lineage>
        <taxon>Bacteria</taxon>
        <taxon>Pseudomonadati</taxon>
        <taxon>Pseudomonadota</taxon>
        <taxon>Betaproteobacteria</taxon>
        <taxon>Neisseriales</taxon>
        <taxon>Chromobacteriaceae</taxon>
        <taxon>Chromobacterium</taxon>
    </lineage>
</organism>
<name>DADA_CHRVO</name>
<evidence type="ECO:0000255" key="1">
    <source>
        <dbReference type="HAMAP-Rule" id="MF_01202"/>
    </source>
</evidence>
<feature type="chain" id="PRO_0000166130" description="D-amino acid dehydrogenase">
    <location>
        <begin position="1"/>
        <end position="435"/>
    </location>
</feature>
<feature type="binding site" evidence="1">
    <location>
        <begin position="3"/>
        <end position="17"/>
    </location>
    <ligand>
        <name>FAD</name>
        <dbReference type="ChEBI" id="CHEBI:57692"/>
    </ligand>
</feature>
<reference key="1">
    <citation type="journal article" date="2003" name="Proc. Natl. Acad. Sci. U.S.A.">
        <title>The complete genome sequence of Chromobacterium violaceum reveals remarkable and exploitable bacterial adaptability.</title>
        <authorList>
            <person name="Vasconcelos A.T.R."/>
            <person name="de Almeida D.F."/>
            <person name="Hungria M."/>
            <person name="Guimaraes C.T."/>
            <person name="Antonio R.V."/>
            <person name="Almeida F.C."/>
            <person name="de Almeida L.G.P."/>
            <person name="de Almeida R."/>
            <person name="Alves-Gomes J.A."/>
            <person name="Andrade E.M."/>
            <person name="Araripe J."/>
            <person name="de Araujo M.F.F."/>
            <person name="Astolfi-Filho S."/>
            <person name="Azevedo V."/>
            <person name="Baptista A.J."/>
            <person name="Bataus L.A.M."/>
            <person name="Batista J.S."/>
            <person name="Belo A."/>
            <person name="van den Berg C."/>
            <person name="Bogo M."/>
            <person name="Bonatto S."/>
            <person name="Bordignon J."/>
            <person name="Brigido M.M."/>
            <person name="Brito C.A."/>
            <person name="Brocchi M."/>
            <person name="Burity H.A."/>
            <person name="Camargo A.A."/>
            <person name="Cardoso D.D.P."/>
            <person name="Carneiro N.P."/>
            <person name="Carraro D.M."/>
            <person name="Carvalho C.M.B."/>
            <person name="Cascardo J.C.M."/>
            <person name="Cavada B.S."/>
            <person name="Chueire L.M.O."/>
            <person name="Creczynski-Pasa T.B."/>
            <person name="Cunha-Junior N.C."/>
            <person name="Fagundes N."/>
            <person name="Falcao C.L."/>
            <person name="Fantinatti F."/>
            <person name="Farias I.P."/>
            <person name="Felipe M.S.S."/>
            <person name="Ferrari L.P."/>
            <person name="Ferro J.A."/>
            <person name="Ferro M.I.T."/>
            <person name="Franco G.R."/>
            <person name="Freitas N.S.A."/>
            <person name="Furlan L.R."/>
            <person name="Gazzinelli R.T."/>
            <person name="Gomes E.A."/>
            <person name="Goncalves P.R."/>
            <person name="Grangeiro T.B."/>
            <person name="Grattapaglia D."/>
            <person name="Grisard E.C."/>
            <person name="Hanna E.S."/>
            <person name="Jardim S.N."/>
            <person name="Laurino J."/>
            <person name="Leoi L.C.T."/>
            <person name="Lima L.F.A."/>
            <person name="Loureiro M.F."/>
            <person name="Lyra M.C.C.P."/>
            <person name="Madeira H.M.F."/>
            <person name="Manfio G.P."/>
            <person name="Maranhao A.Q."/>
            <person name="Martins W.S."/>
            <person name="di Mauro S.M.Z."/>
            <person name="de Medeiros S.R.B."/>
            <person name="Meissner R.V."/>
            <person name="Moreira M.A.M."/>
            <person name="Nascimento F.F."/>
            <person name="Nicolas M.F."/>
            <person name="Oliveira J.G."/>
            <person name="Oliveira S.C."/>
            <person name="Paixao R.F.C."/>
            <person name="Parente J.A."/>
            <person name="Pedrosa F.O."/>
            <person name="Pena S.D.J."/>
            <person name="Pereira J.O."/>
            <person name="Pereira M."/>
            <person name="Pinto L.S.R.C."/>
            <person name="Pinto L.S."/>
            <person name="Porto J.I.R."/>
            <person name="Potrich D.P."/>
            <person name="Ramalho-Neto C.E."/>
            <person name="Reis A.M.M."/>
            <person name="Rigo L.U."/>
            <person name="Rondinelli E."/>
            <person name="Santos E.B.P."/>
            <person name="Santos F.R."/>
            <person name="Schneider M.P.C."/>
            <person name="Seuanez H.N."/>
            <person name="Silva A.M.R."/>
            <person name="da Silva A.L.C."/>
            <person name="Silva D.W."/>
            <person name="Silva R."/>
            <person name="Simoes I.C."/>
            <person name="Simon D."/>
            <person name="Soares C.M.A."/>
            <person name="Soares R.B.A."/>
            <person name="Souza E.M."/>
            <person name="Souza K.R.L."/>
            <person name="Souza R.C."/>
            <person name="Steffens M.B.R."/>
            <person name="Steindel M."/>
            <person name="Teixeira S.R."/>
            <person name="Urmenyi T."/>
            <person name="Vettore A."/>
            <person name="Wassem R."/>
            <person name="Zaha A."/>
            <person name="Simpson A.J.G."/>
        </authorList>
    </citation>
    <scope>NUCLEOTIDE SEQUENCE [LARGE SCALE GENOMIC DNA]</scope>
    <source>
        <strain>ATCC 12472 / DSM 30191 / JCM 1249 / CCUG 213 / NBRC 12614 / NCIMB 9131 / NCTC 9757 / MK</strain>
    </source>
</reference>
<protein>
    <recommendedName>
        <fullName evidence="1">D-amino acid dehydrogenase</fullName>
        <ecNumber evidence="1">1.4.99.-</ecNumber>
    </recommendedName>
</protein>
<dbReference type="EC" id="1.4.99.-" evidence="1"/>
<dbReference type="EMBL" id="AE016825">
    <property type="protein sequence ID" value="AAQ59588.1"/>
    <property type="molecule type" value="Genomic_DNA"/>
</dbReference>
<dbReference type="RefSeq" id="WP_011135466.1">
    <property type="nucleotide sequence ID" value="NC_005085.1"/>
</dbReference>
<dbReference type="SMR" id="Q7NWR6"/>
<dbReference type="STRING" id="243365.CV_1914"/>
<dbReference type="KEGG" id="cvi:CV_1914"/>
<dbReference type="eggNOG" id="COG0665">
    <property type="taxonomic scope" value="Bacteria"/>
</dbReference>
<dbReference type="HOGENOM" id="CLU_007884_9_2_4"/>
<dbReference type="OrthoDB" id="18526at2"/>
<dbReference type="UniPathway" id="UPA00043">
    <property type="reaction ID" value="UER00498"/>
</dbReference>
<dbReference type="Proteomes" id="UP000001424">
    <property type="component" value="Chromosome"/>
</dbReference>
<dbReference type="GO" id="GO:0005737">
    <property type="term" value="C:cytoplasm"/>
    <property type="evidence" value="ECO:0007669"/>
    <property type="project" value="TreeGrafter"/>
</dbReference>
<dbReference type="GO" id="GO:0005886">
    <property type="term" value="C:plasma membrane"/>
    <property type="evidence" value="ECO:0007669"/>
    <property type="project" value="TreeGrafter"/>
</dbReference>
<dbReference type="GO" id="GO:0008718">
    <property type="term" value="F:D-amino-acid dehydrogenase activity"/>
    <property type="evidence" value="ECO:0007669"/>
    <property type="project" value="UniProtKB-UniRule"/>
</dbReference>
<dbReference type="GO" id="GO:0055130">
    <property type="term" value="P:D-alanine catabolic process"/>
    <property type="evidence" value="ECO:0007669"/>
    <property type="project" value="UniProtKB-UniPathway"/>
</dbReference>
<dbReference type="FunFam" id="3.50.50.60:FF:000020">
    <property type="entry name" value="D-amino acid dehydrogenase"/>
    <property type="match status" value="1"/>
</dbReference>
<dbReference type="Gene3D" id="3.30.9.10">
    <property type="entry name" value="D-Amino Acid Oxidase, subunit A, domain 2"/>
    <property type="match status" value="1"/>
</dbReference>
<dbReference type="Gene3D" id="3.50.50.60">
    <property type="entry name" value="FAD/NAD(P)-binding domain"/>
    <property type="match status" value="2"/>
</dbReference>
<dbReference type="HAMAP" id="MF_01202">
    <property type="entry name" value="DadA"/>
    <property type="match status" value="1"/>
</dbReference>
<dbReference type="InterPro" id="IPR023080">
    <property type="entry name" value="DadA"/>
</dbReference>
<dbReference type="InterPro" id="IPR006076">
    <property type="entry name" value="FAD-dep_OxRdtase"/>
</dbReference>
<dbReference type="InterPro" id="IPR036188">
    <property type="entry name" value="FAD/NAD-bd_sf"/>
</dbReference>
<dbReference type="NCBIfam" id="NF001933">
    <property type="entry name" value="PRK00711.1"/>
    <property type="match status" value="1"/>
</dbReference>
<dbReference type="PANTHER" id="PTHR13847:SF280">
    <property type="entry name" value="D-AMINO ACID DEHYDROGENASE"/>
    <property type="match status" value="1"/>
</dbReference>
<dbReference type="PANTHER" id="PTHR13847">
    <property type="entry name" value="SARCOSINE DEHYDROGENASE-RELATED"/>
    <property type="match status" value="1"/>
</dbReference>
<dbReference type="Pfam" id="PF01266">
    <property type="entry name" value="DAO"/>
    <property type="match status" value="1"/>
</dbReference>
<dbReference type="SUPFAM" id="SSF54373">
    <property type="entry name" value="FAD-linked reductases, C-terminal domain"/>
    <property type="match status" value="1"/>
</dbReference>
<dbReference type="SUPFAM" id="SSF51905">
    <property type="entry name" value="FAD/NAD(P)-binding domain"/>
    <property type="match status" value="1"/>
</dbReference>
<accession>Q7NWR6</accession>